<feature type="chain" id="PRO_0000370027" description="3-deoxy-manno-octulosonate cytidylyltransferase">
    <location>
        <begin position="1"/>
        <end position="263"/>
    </location>
</feature>
<name>KDSB_BURMA</name>
<organism>
    <name type="scientific">Burkholderia mallei (strain ATCC 23344)</name>
    <dbReference type="NCBI Taxonomy" id="243160"/>
    <lineage>
        <taxon>Bacteria</taxon>
        <taxon>Pseudomonadati</taxon>
        <taxon>Pseudomonadota</taxon>
        <taxon>Betaproteobacteria</taxon>
        <taxon>Burkholderiales</taxon>
        <taxon>Burkholderiaceae</taxon>
        <taxon>Burkholderia</taxon>
        <taxon>pseudomallei group</taxon>
    </lineage>
</organism>
<accession>Q62HI2</accession>
<sequence>MTSPLPFVAVVPARLASTRLPNKPLADLGGKPMVVRVAERAREAGAQQVLVASDAQRVLDAVREHGFDAVLTRADHPSGTDRLAEVAAKLGFDDDTIVVNVQGDEPLIDPQLVRDVASHLAAHPSCAIATAAHPIHEAHEVFNPNYVKVVLDAHGVALYFSRAPIPWSRDAYLPHWPNVAAMPAPTCPVYRHIGLYAYRARFLRTYPTLAQAPIEAAEQLEQLRAMWHGERIAVRVTEHAPEAGIDTPADLERVQALFRSRAK</sequence>
<gene>
    <name evidence="1" type="primary">kdsB</name>
    <name type="ordered locus">BMA2275</name>
</gene>
<proteinExistence type="inferred from homology"/>
<comment type="function">
    <text evidence="1">Activates KDO (a required 8-carbon sugar) for incorporation into bacterial lipopolysaccharide in Gram-negative bacteria.</text>
</comment>
<comment type="catalytic activity">
    <reaction evidence="1">
        <text>3-deoxy-alpha-D-manno-oct-2-ulosonate + CTP = CMP-3-deoxy-beta-D-manno-octulosonate + diphosphate</text>
        <dbReference type="Rhea" id="RHEA:23448"/>
        <dbReference type="ChEBI" id="CHEBI:33019"/>
        <dbReference type="ChEBI" id="CHEBI:37563"/>
        <dbReference type="ChEBI" id="CHEBI:85986"/>
        <dbReference type="ChEBI" id="CHEBI:85987"/>
        <dbReference type="EC" id="2.7.7.38"/>
    </reaction>
</comment>
<comment type="pathway">
    <text evidence="1">Nucleotide-sugar biosynthesis; CMP-3-deoxy-D-manno-octulosonate biosynthesis; CMP-3-deoxy-D-manno-octulosonate from 3-deoxy-D-manno-octulosonate and CTP: step 1/1.</text>
</comment>
<comment type="pathway">
    <text evidence="1">Bacterial outer membrane biogenesis; lipopolysaccharide biosynthesis.</text>
</comment>
<comment type="subcellular location">
    <subcellularLocation>
        <location evidence="1">Cytoplasm</location>
    </subcellularLocation>
</comment>
<comment type="similarity">
    <text evidence="1">Belongs to the KdsB family.</text>
</comment>
<keyword id="KW-0963">Cytoplasm</keyword>
<keyword id="KW-0448">Lipopolysaccharide biosynthesis</keyword>
<keyword id="KW-0548">Nucleotidyltransferase</keyword>
<keyword id="KW-1185">Reference proteome</keyword>
<keyword id="KW-0808">Transferase</keyword>
<reference key="1">
    <citation type="journal article" date="2004" name="Proc. Natl. Acad. Sci. U.S.A.">
        <title>Structural flexibility in the Burkholderia mallei genome.</title>
        <authorList>
            <person name="Nierman W.C."/>
            <person name="DeShazer D."/>
            <person name="Kim H.S."/>
            <person name="Tettelin H."/>
            <person name="Nelson K.E."/>
            <person name="Feldblyum T.V."/>
            <person name="Ulrich R.L."/>
            <person name="Ronning C.M."/>
            <person name="Brinkac L.M."/>
            <person name="Daugherty S.C."/>
            <person name="Davidsen T.D."/>
            <person name="DeBoy R.T."/>
            <person name="Dimitrov G."/>
            <person name="Dodson R.J."/>
            <person name="Durkin A.S."/>
            <person name="Gwinn M.L."/>
            <person name="Haft D.H."/>
            <person name="Khouri H.M."/>
            <person name="Kolonay J.F."/>
            <person name="Madupu R."/>
            <person name="Mohammoud Y."/>
            <person name="Nelson W.C."/>
            <person name="Radune D."/>
            <person name="Romero C.M."/>
            <person name="Sarria S."/>
            <person name="Selengut J."/>
            <person name="Shamblin C."/>
            <person name="Sullivan S.A."/>
            <person name="White O."/>
            <person name="Yu Y."/>
            <person name="Zafar N."/>
            <person name="Zhou L."/>
            <person name="Fraser C.M."/>
        </authorList>
    </citation>
    <scope>NUCLEOTIDE SEQUENCE [LARGE SCALE GENOMIC DNA]</scope>
    <source>
        <strain>ATCC 23344</strain>
    </source>
</reference>
<dbReference type="EC" id="2.7.7.38" evidence="1"/>
<dbReference type="EMBL" id="CP000010">
    <property type="protein sequence ID" value="AAU49875.1"/>
    <property type="molecule type" value="Genomic_DNA"/>
</dbReference>
<dbReference type="RefSeq" id="WP_004185994.1">
    <property type="nucleotide sequence ID" value="NC_006348.1"/>
</dbReference>
<dbReference type="RefSeq" id="YP_103838.1">
    <property type="nucleotide sequence ID" value="NC_006348.1"/>
</dbReference>
<dbReference type="SMR" id="Q62HI2"/>
<dbReference type="GeneID" id="92979969"/>
<dbReference type="KEGG" id="bma:BMA2275"/>
<dbReference type="PATRIC" id="fig|243160.12.peg.2343"/>
<dbReference type="eggNOG" id="COG1212">
    <property type="taxonomic scope" value="Bacteria"/>
</dbReference>
<dbReference type="HOGENOM" id="CLU_065038_1_0_4"/>
<dbReference type="UniPathway" id="UPA00030"/>
<dbReference type="UniPathway" id="UPA00358">
    <property type="reaction ID" value="UER00476"/>
</dbReference>
<dbReference type="Proteomes" id="UP000006693">
    <property type="component" value="Chromosome 1"/>
</dbReference>
<dbReference type="GO" id="GO:0005829">
    <property type="term" value="C:cytosol"/>
    <property type="evidence" value="ECO:0007669"/>
    <property type="project" value="TreeGrafter"/>
</dbReference>
<dbReference type="GO" id="GO:0008690">
    <property type="term" value="F:3-deoxy-manno-octulosonate cytidylyltransferase activity"/>
    <property type="evidence" value="ECO:0007669"/>
    <property type="project" value="UniProtKB-UniRule"/>
</dbReference>
<dbReference type="GO" id="GO:0033468">
    <property type="term" value="P:CMP-keto-3-deoxy-D-manno-octulosonic acid biosynthetic process"/>
    <property type="evidence" value="ECO:0007669"/>
    <property type="project" value="UniProtKB-UniRule"/>
</dbReference>
<dbReference type="GO" id="GO:0009103">
    <property type="term" value="P:lipopolysaccharide biosynthetic process"/>
    <property type="evidence" value="ECO:0007669"/>
    <property type="project" value="UniProtKB-UniRule"/>
</dbReference>
<dbReference type="CDD" id="cd02517">
    <property type="entry name" value="CMP-KDO-Synthetase"/>
    <property type="match status" value="1"/>
</dbReference>
<dbReference type="FunFam" id="3.90.550.10:FF:000011">
    <property type="entry name" value="3-deoxy-manno-octulosonate cytidylyltransferase"/>
    <property type="match status" value="1"/>
</dbReference>
<dbReference type="Gene3D" id="3.90.550.10">
    <property type="entry name" value="Spore Coat Polysaccharide Biosynthesis Protein SpsA, Chain A"/>
    <property type="match status" value="1"/>
</dbReference>
<dbReference type="HAMAP" id="MF_00057">
    <property type="entry name" value="KdsB"/>
    <property type="match status" value="1"/>
</dbReference>
<dbReference type="InterPro" id="IPR003329">
    <property type="entry name" value="Cytidylyl_trans"/>
</dbReference>
<dbReference type="InterPro" id="IPR004528">
    <property type="entry name" value="KdsB"/>
</dbReference>
<dbReference type="InterPro" id="IPR029044">
    <property type="entry name" value="Nucleotide-diphossugar_trans"/>
</dbReference>
<dbReference type="NCBIfam" id="TIGR00466">
    <property type="entry name" value="kdsB"/>
    <property type="match status" value="1"/>
</dbReference>
<dbReference type="NCBIfam" id="NF003950">
    <property type="entry name" value="PRK05450.1-3"/>
    <property type="match status" value="1"/>
</dbReference>
<dbReference type="NCBIfam" id="NF003952">
    <property type="entry name" value="PRK05450.1-5"/>
    <property type="match status" value="1"/>
</dbReference>
<dbReference type="NCBIfam" id="NF009905">
    <property type="entry name" value="PRK13368.1"/>
    <property type="match status" value="1"/>
</dbReference>
<dbReference type="PANTHER" id="PTHR42866">
    <property type="entry name" value="3-DEOXY-MANNO-OCTULOSONATE CYTIDYLYLTRANSFERASE"/>
    <property type="match status" value="1"/>
</dbReference>
<dbReference type="PANTHER" id="PTHR42866:SF2">
    <property type="entry name" value="3-DEOXY-MANNO-OCTULOSONATE CYTIDYLYLTRANSFERASE, MITOCHONDRIAL"/>
    <property type="match status" value="1"/>
</dbReference>
<dbReference type="Pfam" id="PF02348">
    <property type="entry name" value="CTP_transf_3"/>
    <property type="match status" value="1"/>
</dbReference>
<dbReference type="SUPFAM" id="SSF53448">
    <property type="entry name" value="Nucleotide-diphospho-sugar transferases"/>
    <property type="match status" value="1"/>
</dbReference>
<protein>
    <recommendedName>
        <fullName evidence="1">3-deoxy-manno-octulosonate cytidylyltransferase</fullName>
        <ecNumber evidence="1">2.7.7.38</ecNumber>
    </recommendedName>
    <alternativeName>
        <fullName evidence="1">CMP-2-keto-3-deoxyoctulosonic acid synthase</fullName>
        <shortName evidence="1">CKS</shortName>
        <shortName evidence="1">CMP-KDO synthase</shortName>
    </alternativeName>
</protein>
<evidence type="ECO:0000255" key="1">
    <source>
        <dbReference type="HAMAP-Rule" id="MF_00057"/>
    </source>
</evidence>